<evidence type="ECO:0000255" key="1">
    <source>
        <dbReference type="HAMAP-Rule" id="MF_00014"/>
    </source>
</evidence>
<name>RIMM_LISIN</name>
<accession>Q92AL5</accession>
<comment type="function">
    <text evidence="1">An accessory protein needed during the final step in the assembly of 30S ribosomal subunit, possibly for assembly of the head region. Essential for efficient processing of 16S rRNA. May be needed both before and after RbfA during the maturation of 16S rRNA. It has affinity for free ribosomal 30S subunits but not for 70S ribosomes.</text>
</comment>
<comment type="subunit">
    <text evidence="1">Binds ribosomal protein uS19.</text>
</comment>
<comment type="subcellular location">
    <subcellularLocation>
        <location evidence="1">Cytoplasm</location>
    </subcellularLocation>
</comment>
<comment type="domain">
    <text evidence="1">The PRC barrel domain binds ribosomal protein uS19.</text>
</comment>
<comment type="similarity">
    <text evidence="1">Belongs to the RimM family.</text>
</comment>
<sequence length="172" mass="19663">MEKMYNVGKIVNTHGLIGEIRVIATTDFPEERFQVGNTVYLFEKNSKKPEKLIIRSHRKHKNFDLLMFEGLTGIHQVERMKEGVLKIKEAQLTDLEENEFYFHEIIGCTVVTTDGEELGEITEILTPGANDVWVVKGADKKEKLIPYIADVVKDINTNDKKITIEVMEGLLD</sequence>
<protein>
    <recommendedName>
        <fullName evidence="1">Ribosome maturation factor RimM</fullName>
    </recommendedName>
</protein>
<gene>
    <name evidence="1" type="primary">rimM</name>
    <name type="ordered locus">lin1907</name>
</gene>
<feature type="chain" id="PRO_0000163312" description="Ribosome maturation factor RimM">
    <location>
        <begin position="1"/>
        <end position="172"/>
    </location>
</feature>
<feature type="domain" description="PRC barrel" evidence="1">
    <location>
        <begin position="97"/>
        <end position="170"/>
    </location>
</feature>
<dbReference type="EMBL" id="AL596170">
    <property type="protein sequence ID" value="CAC97137.1"/>
    <property type="molecule type" value="Genomic_DNA"/>
</dbReference>
<dbReference type="PIR" id="AI1670">
    <property type="entry name" value="AI1670"/>
</dbReference>
<dbReference type="RefSeq" id="WP_003772415.1">
    <property type="nucleotide sequence ID" value="NC_003212.1"/>
</dbReference>
<dbReference type="SMR" id="Q92AL5"/>
<dbReference type="STRING" id="272626.gene:17566265"/>
<dbReference type="GeneID" id="93235245"/>
<dbReference type="KEGG" id="lin:lin1907"/>
<dbReference type="eggNOG" id="COG0806">
    <property type="taxonomic scope" value="Bacteria"/>
</dbReference>
<dbReference type="HOGENOM" id="CLU_077636_3_1_9"/>
<dbReference type="OrthoDB" id="9810331at2"/>
<dbReference type="Proteomes" id="UP000002513">
    <property type="component" value="Chromosome"/>
</dbReference>
<dbReference type="GO" id="GO:0005737">
    <property type="term" value="C:cytoplasm"/>
    <property type="evidence" value="ECO:0007669"/>
    <property type="project" value="UniProtKB-SubCell"/>
</dbReference>
<dbReference type="GO" id="GO:0005840">
    <property type="term" value="C:ribosome"/>
    <property type="evidence" value="ECO:0007669"/>
    <property type="project" value="InterPro"/>
</dbReference>
<dbReference type="GO" id="GO:0043022">
    <property type="term" value="F:ribosome binding"/>
    <property type="evidence" value="ECO:0007669"/>
    <property type="project" value="InterPro"/>
</dbReference>
<dbReference type="GO" id="GO:0042274">
    <property type="term" value="P:ribosomal small subunit biogenesis"/>
    <property type="evidence" value="ECO:0007669"/>
    <property type="project" value="UniProtKB-UniRule"/>
</dbReference>
<dbReference type="GO" id="GO:0006364">
    <property type="term" value="P:rRNA processing"/>
    <property type="evidence" value="ECO:0007669"/>
    <property type="project" value="UniProtKB-UniRule"/>
</dbReference>
<dbReference type="Gene3D" id="2.30.30.240">
    <property type="entry name" value="PRC-barrel domain"/>
    <property type="match status" value="1"/>
</dbReference>
<dbReference type="Gene3D" id="2.40.30.60">
    <property type="entry name" value="RimM"/>
    <property type="match status" value="1"/>
</dbReference>
<dbReference type="HAMAP" id="MF_00014">
    <property type="entry name" value="Ribosome_mat_RimM"/>
    <property type="match status" value="1"/>
</dbReference>
<dbReference type="InterPro" id="IPR027275">
    <property type="entry name" value="PRC-brl_dom"/>
</dbReference>
<dbReference type="InterPro" id="IPR011033">
    <property type="entry name" value="PRC_barrel-like_sf"/>
</dbReference>
<dbReference type="InterPro" id="IPR011961">
    <property type="entry name" value="RimM"/>
</dbReference>
<dbReference type="InterPro" id="IPR002676">
    <property type="entry name" value="RimM_N"/>
</dbReference>
<dbReference type="InterPro" id="IPR036976">
    <property type="entry name" value="RimM_N_sf"/>
</dbReference>
<dbReference type="InterPro" id="IPR009000">
    <property type="entry name" value="Transl_B-barrel_sf"/>
</dbReference>
<dbReference type="NCBIfam" id="TIGR02273">
    <property type="entry name" value="16S_RimM"/>
    <property type="match status" value="1"/>
</dbReference>
<dbReference type="PANTHER" id="PTHR33692">
    <property type="entry name" value="RIBOSOME MATURATION FACTOR RIMM"/>
    <property type="match status" value="1"/>
</dbReference>
<dbReference type="PANTHER" id="PTHR33692:SF1">
    <property type="entry name" value="RIBOSOME MATURATION FACTOR RIMM"/>
    <property type="match status" value="1"/>
</dbReference>
<dbReference type="Pfam" id="PF05239">
    <property type="entry name" value="PRC"/>
    <property type="match status" value="1"/>
</dbReference>
<dbReference type="Pfam" id="PF01782">
    <property type="entry name" value="RimM"/>
    <property type="match status" value="1"/>
</dbReference>
<dbReference type="SUPFAM" id="SSF50346">
    <property type="entry name" value="PRC-barrel domain"/>
    <property type="match status" value="1"/>
</dbReference>
<dbReference type="SUPFAM" id="SSF50447">
    <property type="entry name" value="Translation proteins"/>
    <property type="match status" value="1"/>
</dbReference>
<reference key="1">
    <citation type="journal article" date="2001" name="Science">
        <title>Comparative genomics of Listeria species.</title>
        <authorList>
            <person name="Glaser P."/>
            <person name="Frangeul L."/>
            <person name="Buchrieser C."/>
            <person name="Rusniok C."/>
            <person name="Amend A."/>
            <person name="Baquero F."/>
            <person name="Berche P."/>
            <person name="Bloecker H."/>
            <person name="Brandt P."/>
            <person name="Chakraborty T."/>
            <person name="Charbit A."/>
            <person name="Chetouani F."/>
            <person name="Couve E."/>
            <person name="de Daruvar A."/>
            <person name="Dehoux P."/>
            <person name="Domann E."/>
            <person name="Dominguez-Bernal G."/>
            <person name="Duchaud E."/>
            <person name="Durant L."/>
            <person name="Dussurget O."/>
            <person name="Entian K.-D."/>
            <person name="Fsihi H."/>
            <person name="Garcia-del Portillo F."/>
            <person name="Garrido P."/>
            <person name="Gautier L."/>
            <person name="Goebel W."/>
            <person name="Gomez-Lopez N."/>
            <person name="Hain T."/>
            <person name="Hauf J."/>
            <person name="Jackson D."/>
            <person name="Jones L.-M."/>
            <person name="Kaerst U."/>
            <person name="Kreft J."/>
            <person name="Kuhn M."/>
            <person name="Kunst F."/>
            <person name="Kurapkat G."/>
            <person name="Madueno E."/>
            <person name="Maitournam A."/>
            <person name="Mata Vicente J."/>
            <person name="Ng E."/>
            <person name="Nedjari H."/>
            <person name="Nordsiek G."/>
            <person name="Novella S."/>
            <person name="de Pablos B."/>
            <person name="Perez-Diaz J.-C."/>
            <person name="Purcell R."/>
            <person name="Remmel B."/>
            <person name="Rose M."/>
            <person name="Schlueter T."/>
            <person name="Simoes N."/>
            <person name="Tierrez A."/>
            <person name="Vazquez-Boland J.-A."/>
            <person name="Voss H."/>
            <person name="Wehland J."/>
            <person name="Cossart P."/>
        </authorList>
    </citation>
    <scope>NUCLEOTIDE SEQUENCE [LARGE SCALE GENOMIC DNA]</scope>
    <source>
        <strain>ATCC BAA-680 / CLIP 11262</strain>
    </source>
</reference>
<organism>
    <name type="scientific">Listeria innocua serovar 6a (strain ATCC BAA-680 / CLIP 11262)</name>
    <dbReference type="NCBI Taxonomy" id="272626"/>
    <lineage>
        <taxon>Bacteria</taxon>
        <taxon>Bacillati</taxon>
        <taxon>Bacillota</taxon>
        <taxon>Bacilli</taxon>
        <taxon>Bacillales</taxon>
        <taxon>Listeriaceae</taxon>
        <taxon>Listeria</taxon>
    </lineage>
</organism>
<keyword id="KW-0143">Chaperone</keyword>
<keyword id="KW-0963">Cytoplasm</keyword>
<keyword id="KW-0690">Ribosome biogenesis</keyword>
<keyword id="KW-0698">rRNA processing</keyword>
<proteinExistence type="inferred from homology"/>